<name>RS2_GEOSW</name>
<comment type="similarity">
    <text evidence="1">Belongs to the universal ribosomal protein uS2 family.</text>
</comment>
<gene>
    <name evidence="1" type="primary">rpsB</name>
    <name type="ordered locus">GWCH70_1141</name>
</gene>
<protein>
    <recommendedName>
        <fullName evidence="1">Small ribosomal subunit protein uS2</fullName>
    </recommendedName>
    <alternativeName>
        <fullName evidence="2">30S ribosomal protein S2</fullName>
    </alternativeName>
</protein>
<evidence type="ECO:0000255" key="1">
    <source>
        <dbReference type="HAMAP-Rule" id="MF_00291"/>
    </source>
</evidence>
<evidence type="ECO:0000305" key="2"/>
<feature type="chain" id="PRO_1000204885" description="Small ribosomal subunit protein uS2">
    <location>
        <begin position="1"/>
        <end position="235"/>
    </location>
</feature>
<keyword id="KW-0687">Ribonucleoprotein</keyword>
<keyword id="KW-0689">Ribosomal protein</keyword>
<reference key="1">
    <citation type="submission" date="2009-06" db="EMBL/GenBank/DDBJ databases">
        <title>Complete sequence of chromosome of Geopacillus sp. WCH70.</title>
        <authorList>
            <consortium name="US DOE Joint Genome Institute"/>
            <person name="Lucas S."/>
            <person name="Copeland A."/>
            <person name="Lapidus A."/>
            <person name="Glavina del Rio T."/>
            <person name="Dalin E."/>
            <person name="Tice H."/>
            <person name="Bruce D."/>
            <person name="Goodwin L."/>
            <person name="Pitluck S."/>
            <person name="Chertkov O."/>
            <person name="Brettin T."/>
            <person name="Detter J.C."/>
            <person name="Han C."/>
            <person name="Larimer F."/>
            <person name="Land M."/>
            <person name="Hauser L."/>
            <person name="Kyrpides N."/>
            <person name="Mikhailova N."/>
            <person name="Brumm P."/>
            <person name="Mead D.A."/>
            <person name="Richardson P."/>
        </authorList>
    </citation>
    <scope>NUCLEOTIDE SEQUENCE [LARGE SCALE GENOMIC DNA]</scope>
    <source>
        <strain>WCH70</strain>
    </source>
</reference>
<sequence>MSVISMKQLLEAGVHFGHQTRRWNPKMKKYIFTERNGIYIIDLQKTVKKMEEAYNFVKELAANGGKILFVGTKKQAQESVKEEAERCGMFYVNQRWLGGTLTNFATIQKRIKRLKEIEKMAEDGTFDVLPKKEVIRIKKEQERLEKFLGGIKEMKELPDALFVIDPRKERIAVAEARKLNIPIIGIVDTNCDPDEIDYVIPANDDAIRAVKLLTSKIADAVLEAKQGEEAVVAAE</sequence>
<organism>
    <name type="scientific">Geobacillus sp. (strain WCH70)</name>
    <dbReference type="NCBI Taxonomy" id="471223"/>
    <lineage>
        <taxon>Bacteria</taxon>
        <taxon>Bacillati</taxon>
        <taxon>Bacillota</taxon>
        <taxon>Bacilli</taxon>
        <taxon>Bacillales</taxon>
        <taxon>Anoxybacillaceae</taxon>
        <taxon>Geobacillus</taxon>
    </lineage>
</organism>
<dbReference type="EMBL" id="CP001638">
    <property type="protein sequence ID" value="ACS24001.1"/>
    <property type="molecule type" value="Genomic_DNA"/>
</dbReference>
<dbReference type="SMR" id="C5D9B5"/>
<dbReference type="STRING" id="471223.GWCH70_1141"/>
<dbReference type="KEGG" id="gwc:GWCH70_1141"/>
<dbReference type="eggNOG" id="COG0052">
    <property type="taxonomic scope" value="Bacteria"/>
</dbReference>
<dbReference type="HOGENOM" id="CLU_040318_1_2_9"/>
<dbReference type="OrthoDB" id="9808036at2"/>
<dbReference type="GO" id="GO:0022627">
    <property type="term" value="C:cytosolic small ribosomal subunit"/>
    <property type="evidence" value="ECO:0007669"/>
    <property type="project" value="TreeGrafter"/>
</dbReference>
<dbReference type="GO" id="GO:0003735">
    <property type="term" value="F:structural constituent of ribosome"/>
    <property type="evidence" value="ECO:0007669"/>
    <property type="project" value="InterPro"/>
</dbReference>
<dbReference type="GO" id="GO:0006412">
    <property type="term" value="P:translation"/>
    <property type="evidence" value="ECO:0007669"/>
    <property type="project" value="UniProtKB-UniRule"/>
</dbReference>
<dbReference type="CDD" id="cd01425">
    <property type="entry name" value="RPS2"/>
    <property type="match status" value="1"/>
</dbReference>
<dbReference type="FunFam" id="1.10.287.610:FF:000001">
    <property type="entry name" value="30S ribosomal protein S2"/>
    <property type="match status" value="1"/>
</dbReference>
<dbReference type="Gene3D" id="3.40.50.10490">
    <property type="entry name" value="Glucose-6-phosphate isomerase like protein, domain 1"/>
    <property type="match status" value="1"/>
</dbReference>
<dbReference type="Gene3D" id="1.10.287.610">
    <property type="entry name" value="Helix hairpin bin"/>
    <property type="match status" value="1"/>
</dbReference>
<dbReference type="HAMAP" id="MF_00291_B">
    <property type="entry name" value="Ribosomal_uS2_B"/>
    <property type="match status" value="1"/>
</dbReference>
<dbReference type="InterPro" id="IPR001865">
    <property type="entry name" value="Ribosomal_uS2"/>
</dbReference>
<dbReference type="InterPro" id="IPR005706">
    <property type="entry name" value="Ribosomal_uS2_bac/mit/plastid"/>
</dbReference>
<dbReference type="InterPro" id="IPR018130">
    <property type="entry name" value="Ribosomal_uS2_CS"/>
</dbReference>
<dbReference type="InterPro" id="IPR023591">
    <property type="entry name" value="Ribosomal_uS2_flav_dom_sf"/>
</dbReference>
<dbReference type="NCBIfam" id="TIGR01011">
    <property type="entry name" value="rpsB_bact"/>
    <property type="match status" value="1"/>
</dbReference>
<dbReference type="PANTHER" id="PTHR12534">
    <property type="entry name" value="30S RIBOSOMAL PROTEIN S2 PROKARYOTIC AND ORGANELLAR"/>
    <property type="match status" value="1"/>
</dbReference>
<dbReference type="PANTHER" id="PTHR12534:SF0">
    <property type="entry name" value="SMALL RIBOSOMAL SUBUNIT PROTEIN US2M"/>
    <property type="match status" value="1"/>
</dbReference>
<dbReference type="Pfam" id="PF00318">
    <property type="entry name" value="Ribosomal_S2"/>
    <property type="match status" value="1"/>
</dbReference>
<dbReference type="PRINTS" id="PR00395">
    <property type="entry name" value="RIBOSOMALS2"/>
</dbReference>
<dbReference type="SUPFAM" id="SSF52313">
    <property type="entry name" value="Ribosomal protein S2"/>
    <property type="match status" value="1"/>
</dbReference>
<dbReference type="PROSITE" id="PS00962">
    <property type="entry name" value="RIBOSOMAL_S2_1"/>
    <property type="match status" value="1"/>
</dbReference>
<dbReference type="PROSITE" id="PS00963">
    <property type="entry name" value="RIBOSOMAL_S2_2"/>
    <property type="match status" value="1"/>
</dbReference>
<proteinExistence type="inferred from homology"/>
<accession>C5D9B5</accession>